<sequence length="230" mass="26137">MDPAMPLQLWNLPLLLVGSVLGLTSVSAQGNNLEICLLPLDAGPCQALIPKFYYDRDQQKCRRFNYGGCLGNANNFHSRDLCQQTCGSIEKVPPVCRSELKTYPCDKPNIRFFFNLNTMTCEPLRPGLCSRTINVFSEEATCKGLCEPRKHIPSFCSSPKDEGLCSANVTRFYFNSRNKTCETFTYTGCGGNENNFYYLDACHRACVKGWKKPKRWKIGDFLPRFWKHLS</sequence>
<reference key="1">
    <citation type="journal article" date="1996" name="DNA Cell Biol.">
        <title>Cloning of the cDNA encoding mouse PP5/TFPI-2 and mapping of the gene to chromosome 6.</title>
        <authorList>
            <person name="Miyagi Y."/>
            <person name="Yasumitsu H."/>
            <person name="Mizushima H."/>
            <person name="Koshikawa N."/>
            <person name="Matsuda Y."/>
            <person name="Itoh H."/>
            <person name="Hori T."/>
            <person name="Aoki I."/>
            <person name="Misugi K."/>
            <person name="Miyazaki K."/>
        </authorList>
    </citation>
    <scope>NUCLEOTIDE SEQUENCE [MRNA]</scope>
    <source>
        <strain>ICR</strain>
        <tissue>Placenta</tissue>
    </source>
</reference>
<reference key="2">
    <citation type="journal article" date="2000" name="Thromb. Haemost.">
        <title>Nucleotide sequence of the gene encoding murine tissue factor pathway inhibitor-2.</title>
        <authorList>
            <person name="Kazama Y."/>
            <person name="Kamei S."/>
            <person name="Kuijper J.L."/>
            <person name="Foster D.C."/>
            <person name="Kisiel W."/>
        </authorList>
    </citation>
    <scope>NUCLEOTIDE SEQUENCE [GENOMIC DNA]</scope>
    <source>
        <strain>129/SvJ</strain>
    </source>
</reference>
<reference key="3">
    <citation type="journal article" date="2004" name="Genome Res.">
        <title>The status, quality, and expansion of the NIH full-length cDNA project: the Mammalian Gene Collection (MGC).</title>
        <authorList>
            <consortium name="The MGC Project Team"/>
        </authorList>
    </citation>
    <scope>NUCLEOTIDE SEQUENCE [LARGE SCALE MRNA]</scope>
    <source>
        <strain>C57BL/6J</strain>
        <tissue>Mammary gland</tissue>
    </source>
</reference>
<gene>
    <name type="primary">Tfpi2</name>
</gene>
<accession>O35536</accession>
<name>TFPI2_MOUSE</name>
<keyword id="KW-0094">Blood coagulation</keyword>
<keyword id="KW-1015">Disulfide bond</keyword>
<keyword id="KW-0325">Glycoprotein</keyword>
<keyword id="KW-0356">Hemostasis</keyword>
<keyword id="KW-0646">Protease inhibitor</keyword>
<keyword id="KW-1185">Reference proteome</keyword>
<keyword id="KW-0677">Repeat</keyword>
<keyword id="KW-0964">Secreted</keyword>
<keyword id="KW-0722">Serine protease inhibitor</keyword>
<keyword id="KW-0732">Signal</keyword>
<organism>
    <name type="scientific">Mus musculus</name>
    <name type="common">Mouse</name>
    <dbReference type="NCBI Taxonomy" id="10090"/>
    <lineage>
        <taxon>Eukaryota</taxon>
        <taxon>Metazoa</taxon>
        <taxon>Chordata</taxon>
        <taxon>Craniata</taxon>
        <taxon>Vertebrata</taxon>
        <taxon>Euteleostomi</taxon>
        <taxon>Mammalia</taxon>
        <taxon>Eutheria</taxon>
        <taxon>Euarchontoglires</taxon>
        <taxon>Glires</taxon>
        <taxon>Rodentia</taxon>
        <taxon>Myomorpha</taxon>
        <taxon>Muroidea</taxon>
        <taxon>Muridae</taxon>
        <taxon>Murinae</taxon>
        <taxon>Mus</taxon>
        <taxon>Mus</taxon>
    </lineage>
</organism>
<comment type="function">
    <text evidence="1">May play a role in the regulation of plasmin-mediated matrix remodeling. Inhibits trypsin, plasmin, factor VIIa/tissue factor and weakly factor Xa. Has no effect on thrombin (By similarity).</text>
</comment>
<comment type="subunit">
    <text evidence="2">Finds in a complex with ABCB1, TFPI2 and PPP2R3C; leading to the dephosphorylation of ABCB1.</text>
</comment>
<comment type="subcellular location">
    <subcellularLocation>
        <location>Secreted</location>
    </subcellularLocation>
</comment>
<comment type="tissue specificity">
    <text>Highly expressed in placenta. Also expressed in liver and kidney.</text>
</comment>
<comment type="domain">
    <text>This inhibitor contains three inhibitory domains.</text>
</comment>
<proteinExistence type="evidence at transcript level"/>
<feature type="signal peptide" evidence="1">
    <location>
        <begin position="1"/>
        <end position="22"/>
    </location>
</feature>
<feature type="chain" id="PRO_0000016877" description="Tissue factor pathway inhibitor 2">
    <location>
        <begin position="23"/>
        <end position="230"/>
    </location>
</feature>
<feature type="domain" description="BPTI/Kunitz inhibitor 1" evidence="4">
    <location>
        <begin position="36"/>
        <end position="86"/>
    </location>
</feature>
<feature type="domain" description="BPTI/Kunitz inhibitor 2" evidence="4">
    <location>
        <begin position="96"/>
        <end position="146"/>
    </location>
</feature>
<feature type="domain" description="BPTI/Kunitz inhibitor 3" evidence="4">
    <location>
        <begin position="156"/>
        <end position="206"/>
    </location>
</feature>
<feature type="site" description="Reactive bond" evidence="1">
    <location>
        <begin position="46"/>
        <end position="47"/>
    </location>
</feature>
<feature type="site" description="Reactive bond" evidence="1">
    <location>
        <begin position="106"/>
        <end position="107"/>
    </location>
</feature>
<feature type="site" description="Reactive bond" evidence="1">
    <location>
        <begin position="166"/>
        <end position="167"/>
    </location>
</feature>
<feature type="glycosylation site" description="N-linked (GlcNAc...) asparagine" evidence="3">
    <location>
        <position position="168"/>
    </location>
</feature>
<feature type="glycosylation site" description="N-linked (GlcNAc...) asparagine" evidence="3">
    <location>
        <position position="178"/>
    </location>
</feature>
<feature type="disulfide bond" evidence="4">
    <location>
        <begin position="36"/>
        <end position="86"/>
    </location>
</feature>
<feature type="disulfide bond" evidence="4">
    <location>
        <begin position="45"/>
        <end position="69"/>
    </location>
</feature>
<feature type="disulfide bond" evidence="4">
    <location>
        <begin position="61"/>
        <end position="82"/>
    </location>
</feature>
<feature type="disulfide bond" evidence="4">
    <location>
        <begin position="96"/>
        <end position="146"/>
    </location>
</feature>
<feature type="disulfide bond" evidence="4">
    <location>
        <begin position="105"/>
        <end position="129"/>
    </location>
</feature>
<feature type="disulfide bond" evidence="4">
    <location>
        <begin position="121"/>
        <end position="142"/>
    </location>
</feature>
<feature type="disulfide bond" evidence="4">
    <location>
        <begin position="156"/>
        <end position="206"/>
    </location>
</feature>
<feature type="disulfide bond" evidence="4">
    <location>
        <begin position="165"/>
        <end position="189"/>
    </location>
</feature>
<feature type="disulfide bond" evidence="4">
    <location>
        <begin position="181"/>
        <end position="202"/>
    </location>
</feature>
<dbReference type="EMBL" id="D50586">
    <property type="protein sequence ID" value="BAA22585.1"/>
    <property type="molecule type" value="mRNA"/>
</dbReference>
<dbReference type="EMBL" id="AF180353">
    <property type="protein sequence ID" value="AAF40412.1"/>
    <property type="molecule type" value="Genomic_DNA"/>
</dbReference>
<dbReference type="EMBL" id="BC021639">
    <property type="protein sequence ID" value="AAH21639.1"/>
    <property type="molecule type" value="mRNA"/>
</dbReference>
<dbReference type="CCDS" id="CCDS19892.1"/>
<dbReference type="RefSeq" id="NP_033390.1">
    <property type="nucleotide sequence ID" value="NM_009364.4"/>
</dbReference>
<dbReference type="RefSeq" id="XP_011239357.1">
    <property type="nucleotide sequence ID" value="XM_011241055.4"/>
</dbReference>
<dbReference type="SMR" id="O35536"/>
<dbReference type="FunCoup" id="O35536">
    <property type="interactions" value="425"/>
</dbReference>
<dbReference type="STRING" id="10090.ENSMUSP00000031674"/>
<dbReference type="MEROPS" id="I02.013"/>
<dbReference type="MEROPS" id="I02.951"/>
<dbReference type="GlyCosmos" id="O35536">
    <property type="glycosylation" value="2 sites, No reported glycans"/>
</dbReference>
<dbReference type="GlyGen" id="O35536">
    <property type="glycosylation" value="2 sites"/>
</dbReference>
<dbReference type="PhosphoSitePlus" id="O35536"/>
<dbReference type="CPTAC" id="non-CPTAC-3502"/>
<dbReference type="jPOST" id="O35536"/>
<dbReference type="PaxDb" id="10090-ENSMUSP00000031674"/>
<dbReference type="ProteomicsDB" id="258864"/>
<dbReference type="Antibodypedia" id="4115">
    <property type="antibodies" value="536 antibodies from 34 providers"/>
</dbReference>
<dbReference type="DNASU" id="21789"/>
<dbReference type="Ensembl" id="ENSMUST00000031674.11">
    <property type="protein sequence ID" value="ENSMUSP00000031674.8"/>
    <property type="gene ID" value="ENSMUSG00000029664.11"/>
</dbReference>
<dbReference type="GeneID" id="21789"/>
<dbReference type="KEGG" id="mmu:21789"/>
<dbReference type="UCSC" id="uc009avh.1">
    <property type="organism name" value="mouse"/>
</dbReference>
<dbReference type="AGR" id="MGI:108543"/>
<dbReference type="CTD" id="7980"/>
<dbReference type="MGI" id="MGI:108543">
    <property type="gene designation" value="Tfpi2"/>
</dbReference>
<dbReference type="VEuPathDB" id="HostDB:ENSMUSG00000029664"/>
<dbReference type="eggNOG" id="KOG4295">
    <property type="taxonomic scope" value="Eukaryota"/>
</dbReference>
<dbReference type="GeneTree" id="ENSGT00940000159917"/>
<dbReference type="HOGENOM" id="CLU_058441_1_0_1"/>
<dbReference type="InParanoid" id="O35536"/>
<dbReference type="OMA" id="REEYFFN"/>
<dbReference type="OrthoDB" id="5950222at2759"/>
<dbReference type="PhylomeDB" id="O35536"/>
<dbReference type="TreeFam" id="TF315349"/>
<dbReference type="BioGRID-ORCS" id="21789">
    <property type="hits" value="1 hit in 77 CRISPR screens"/>
</dbReference>
<dbReference type="ChiTaRS" id="Tfpi2">
    <property type="organism name" value="mouse"/>
</dbReference>
<dbReference type="PRO" id="PR:O35536"/>
<dbReference type="Proteomes" id="UP000000589">
    <property type="component" value="Chromosome 6"/>
</dbReference>
<dbReference type="RNAct" id="O35536">
    <property type="molecule type" value="protein"/>
</dbReference>
<dbReference type="Bgee" id="ENSMUSG00000029664">
    <property type="expression patterns" value="Expressed in decidua and 97 other cell types or tissues"/>
</dbReference>
<dbReference type="ExpressionAtlas" id="O35536">
    <property type="expression patterns" value="baseline and differential"/>
</dbReference>
<dbReference type="GO" id="GO:0005576">
    <property type="term" value="C:extracellular region"/>
    <property type="evidence" value="ECO:0007669"/>
    <property type="project" value="UniProtKB-SubCell"/>
</dbReference>
<dbReference type="GO" id="GO:0004867">
    <property type="term" value="F:serine-type endopeptidase inhibitor activity"/>
    <property type="evidence" value="ECO:0007669"/>
    <property type="project" value="UniProtKB-KW"/>
</dbReference>
<dbReference type="GO" id="GO:0007596">
    <property type="term" value="P:blood coagulation"/>
    <property type="evidence" value="ECO:0007669"/>
    <property type="project" value="UniProtKB-KW"/>
</dbReference>
<dbReference type="CDD" id="cd22615">
    <property type="entry name" value="Kunitz_TFPI1_TFPI2_3-like"/>
    <property type="match status" value="1"/>
</dbReference>
<dbReference type="CDD" id="cd22616">
    <property type="entry name" value="Kunitz_TFPI2_1-like"/>
    <property type="match status" value="1"/>
</dbReference>
<dbReference type="FunFam" id="4.10.410.10:FF:000011">
    <property type="entry name" value="Tissue factor pathway inhibitor"/>
    <property type="match status" value="1"/>
</dbReference>
<dbReference type="FunFam" id="4.10.410.10:FF:000018">
    <property type="entry name" value="Tissue factor pathway inhibitor"/>
    <property type="match status" value="1"/>
</dbReference>
<dbReference type="Gene3D" id="4.10.410.10">
    <property type="entry name" value="Pancreatic trypsin inhibitor Kunitz domain"/>
    <property type="match status" value="3"/>
</dbReference>
<dbReference type="InterPro" id="IPR002223">
    <property type="entry name" value="Kunitz_BPTI"/>
</dbReference>
<dbReference type="InterPro" id="IPR036880">
    <property type="entry name" value="Kunitz_BPTI_sf"/>
</dbReference>
<dbReference type="InterPro" id="IPR020901">
    <property type="entry name" value="Prtase_inh_Kunz-CS"/>
</dbReference>
<dbReference type="InterPro" id="IPR008296">
    <property type="entry name" value="TFPI-like"/>
</dbReference>
<dbReference type="InterPro" id="IPR050098">
    <property type="entry name" value="TFPI/VKTCI-like"/>
</dbReference>
<dbReference type="PANTHER" id="PTHR10083">
    <property type="entry name" value="KUNITZ-TYPE PROTEASE INHIBITOR-RELATED"/>
    <property type="match status" value="1"/>
</dbReference>
<dbReference type="Pfam" id="PF00014">
    <property type="entry name" value="Kunitz_BPTI"/>
    <property type="match status" value="3"/>
</dbReference>
<dbReference type="PIRSF" id="PIRSF001620">
    <property type="entry name" value="TFPI"/>
    <property type="match status" value="1"/>
</dbReference>
<dbReference type="PRINTS" id="PR00759">
    <property type="entry name" value="BASICPTASE"/>
</dbReference>
<dbReference type="SMART" id="SM00131">
    <property type="entry name" value="KU"/>
    <property type="match status" value="3"/>
</dbReference>
<dbReference type="SUPFAM" id="SSF57362">
    <property type="entry name" value="BPTI-like"/>
    <property type="match status" value="3"/>
</dbReference>
<dbReference type="PROSITE" id="PS00280">
    <property type="entry name" value="BPTI_KUNITZ_1"/>
    <property type="match status" value="2"/>
</dbReference>
<dbReference type="PROSITE" id="PS50279">
    <property type="entry name" value="BPTI_KUNITZ_2"/>
    <property type="match status" value="3"/>
</dbReference>
<protein>
    <recommendedName>
        <fullName>Tissue factor pathway inhibitor 2</fullName>
        <shortName>TFPI-2</shortName>
    </recommendedName>
</protein>
<evidence type="ECO:0000250" key="1"/>
<evidence type="ECO:0000250" key="2">
    <source>
        <dbReference type="UniProtKB" id="P48307"/>
    </source>
</evidence>
<evidence type="ECO:0000255" key="3"/>
<evidence type="ECO:0000255" key="4">
    <source>
        <dbReference type="PROSITE-ProRule" id="PRU00031"/>
    </source>
</evidence>